<evidence type="ECO:0000255" key="1"/>
<evidence type="ECO:0000255" key="2">
    <source>
        <dbReference type="PROSITE-ProRule" id="PRU00114"/>
    </source>
</evidence>
<evidence type="ECO:0000256" key="3">
    <source>
        <dbReference type="SAM" id="MobiDB-lite"/>
    </source>
</evidence>
<evidence type="ECO:0000269" key="4">
    <source>
    </source>
</evidence>
<evidence type="ECO:0000269" key="5">
    <source ref="1"/>
</evidence>
<evidence type="ECO:0000303" key="6">
    <source>
    </source>
</evidence>
<evidence type="ECO:0000303" key="7">
    <source ref="1"/>
</evidence>
<evidence type="ECO:0000305" key="8"/>
<comment type="subcellular location">
    <subcellularLocation>
        <location evidence="8">Membrane</location>
        <topology evidence="8">Single-pass type I membrane protein</topology>
    </subcellularLocation>
</comment>
<comment type="alternative products">
    <event type="alternative splicing"/>
    <isoform>
        <id>Q5JXA9-1</id>
        <name>1</name>
        <sequence type="displayed"/>
    </isoform>
    <isoform>
        <id>Q5JXA9-2</id>
        <name>2</name>
        <sequence type="described" ref="VSP_034065 VSP_034066"/>
    </isoform>
    <isoform>
        <id>Q5JXA9-3</id>
        <name>3</name>
        <sequence type="described" ref="VSP_034065"/>
    </isoform>
</comment>
<organism>
    <name type="scientific">Homo sapiens</name>
    <name type="common">Human</name>
    <dbReference type="NCBI Taxonomy" id="9606"/>
    <lineage>
        <taxon>Eukaryota</taxon>
        <taxon>Metazoa</taxon>
        <taxon>Chordata</taxon>
        <taxon>Craniata</taxon>
        <taxon>Vertebrata</taxon>
        <taxon>Euteleostomi</taxon>
        <taxon>Mammalia</taxon>
        <taxon>Eutheria</taxon>
        <taxon>Euarchontoglires</taxon>
        <taxon>Primates</taxon>
        <taxon>Haplorrhini</taxon>
        <taxon>Catarrhini</taxon>
        <taxon>Hominidae</taxon>
        <taxon>Homo</taxon>
    </lineage>
</organism>
<feature type="signal peptide" evidence="1">
    <location>
        <begin position="1"/>
        <end position="32"/>
    </location>
</feature>
<feature type="chain" id="PRO_0000338629" description="Signal-regulatory protein beta-2">
    <location>
        <begin position="33"/>
        <end position="342"/>
    </location>
</feature>
<feature type="topological domain" description="Extracellular" evidence="1">
    <location>
        <begin position="33"/>
        <end position="287"/>
    </location>
</feature>
<feature type="transmembrane region" description="Helical" evidence="1">
    <location>
        <begin position="288"/>
        <end position="308"/>
    </location>
</feature>
<feature type="topological domain" description="Cytoplasmic" evidence="1">
    <location>
        <begin position="309"/>
        <end position="342"/>
    </location>
</feature>
<feature type="domain" description="Ig-like V-type 1">
    <location>
        <begin position="33"/>
        <end position="143"/>
    </location>
</feature>
<feature type="domain" description="Ig-like V-type 2">
    <location>
        <begin position="157"/>
        <end position="258"/>
    </location>
</feature>
<feature type="region of interest" description="Disordered" evidence="3">
    <location>
        <begin position="317"/>
        <end position="342"/>
    </location>
</feature>
<feature type="glycosylation site" description="N-linked (GlcNAc...) asparagine" evidence="1">
    <location>
        <position position="116"/>
    </location>
</feature>
<feature type="glycosylation site" description="N-linked (GlcNAc...) asparagine" evidence="1">
    <location>
        <position position="179"/>
    </location>
</feature>
<feature type="glycosylation site" description="N-linked (GlcNAc...) asparagine" evidence="1">
    <location>
        <position position="231"/>
    </location>
</feature>
<feature type="disulfide bond" evidence="2">
    <location>
        <begin position="60"/>
        <end position="127"/>
    </location>
</feature>
<feature type="disulfide bond" evidence="2">
    <location>
        <begin position="180"/>
        <end position="242"/>
    </location>
</feature>
<feature type="splice variant" id="VSP_034065" description="In isoform 2 and isoform 3." evidence="6 7">
    <location>
        <begin position="53"/>
        <end position="150"/>
    </location>
</feature>
<feature type="splice variant" id="VSP_034066" description="In isoform 2." evidence="7">
    <location>
        <begin position="290"/>
        <end position="342"/>
    </location>
</feature>
<feature type="sequence variant" id="VAR_043814" description="In dbSNP:rs6033876.">
    <original>G</original>
    <variation>E</variation>
    <location>
        <position position="153"/>
    </location>
</feature>
<feature type="sequence variant" id="VAR_043815" description="In dbSNP:rs6042507." evidence="4 5">
    <original>E</original>
    <variation>A</variation>
    <location>
        <position position="215"/>
    </location>
</feature>
<feature type="sequence variant" id="VAR_043816" description="In dbSNP:rs8119290.">
    <original>L</original>
    <variation>F</variation>
    <location>
        <position position="304"/>
    </location>
</feature>
<feature type="sequence conflict" description="In Ref. 1; AAR04783." evidence="8" ref="1">
    <original>L</original>
    <variation>Q</variation>
    <location>
        <position position="289"/>
    </location>
</feature>
<proteinExistence type="evidence at protein level"/>
<gene>
    <name type="primary">SIRPB2</name>
    <name type="synonym">PTPN1L</name>
    <name type="synonym">PTPNS1L3</name>
</gene>
<dbReference type="EMBL" id="AY424277">
    <property type="protein sequence ID" value="AAR04783.1"/>
    <property type="molecule type" value="mRNA"/>
</dbReference>
<dbReference type="EMBL" id="AK297072">
    <property type="protein sequence ID" value="BAG59591.1"/>
    <property type="molecule type" value="mRNA"/>
</dbReference>
<dbReference type="EMBL" id="AL109658">
    <property type="status" value="NOT_ANNOTATED_CDS"/>
    <property type="molecule type" value="Genomic_DNA"/>
</dbReference>
<dbReference type="CCDS" id="CCDS42849.1">
    <molecule id="Q5JXA9-1"/>
</dbReference>
<dbReference type="CCDS" id="CCDS46570.1">
    <molecule id="Q5JXA9-3"/>
</dbReference>
<dbReference type="RefSeq" id="NP_001116434.1">
    <molecule id="Q5JXA9-1"/>
    <property type="nucleotide sequence ID" value="NM_001122962.2"/>
</dbReference>
<dbReference type="RefSeq" id="NP_001128308.1">
    <molecule id="Q5JXA9-3"/>
    <property type="nucleotide sequence ID" value="NM_001134836.2"/>
</dbReference>
<dbReference type="SMR" id="Q5JXA9"/>
<dbReference type="FunCoup" id="Q5JXA9">
    <property type="interactions" value="671"/>
</dbReference>
<dbReference type="STRING" id="9606.ENSP00000352849"/>
<dbReference type="GlyCosmos" id="Q5JXA9">
    <property type="glycosylation" value="3 sites, No reported glycans"/>
</dbReference>
<dbReference type="GlyGen" id="Q5JXA9">
    <property type="glycosylation" value="3 sites"/>
</dbReference>
<dbReference type="iPTMnet" id="Q5JXA9"/>
<dbReference type="PhosphoSitePlus" id="Q5JXA9"/>
<dbReference type="BioMuta" id="SIRPB2"/>
<dbReference type="DMDM" id="74762205"/>
<dbReference type="jPOST" id="Q5JXA9"/>
<dbReference type="MassIVE" id="Q5JXA9"/>
<dbReference type="PaxDb" id="9606-ENSP00000352849"/>
<dbReference type="PeptideAtlas" id="Q5JXA9"/>
<dbReference type="ProteomicsDB" id="63437">
    <molecule id="Q5JXA9-1"/>
</dbReference>
<dbReference type="Antibodypedia" id="62736">
    <property type="antibodies" value="111 antibodies from 16 providers"/>
</dbReference>
<dbReference type="DNASU" id="284759"/>
<dbReference type="Ensembl" id="ENST00000359801.8">
    <molecule id="Q5JXA9-1"/>
    <property type="protein sequence ID" value="ENSP00000352849.3"/>
    <property type="gene ID" value="ENSG00000196209.13"/>
</dbReference>
<dbReference type="Ensembl" id="ENST00000444444.2">
    <molecule id="Q5JXA9-3"/>
    <property type="protein sequence ID" value="ENSP00000402438.1"/>
    <property type="gene ID" value="ENSG00000196209.13"/>
</dbReference>
<dbReference type="GeneID" id="284759"/>
<dbReference type="KEGG" id="hsa:284759"/>
<dbReference type="MANE-Select" id="ENST00000359801.8">
    <property type="protein sequence ID" value="ENSP00000352849.3"/>
    <property type="RefSeq nucleotide sequence ID" value="NM_001122962.2"/>
    <property type="RefSeq protein sequence ID" value="NP_001116434.1"/>
</dbReference>
<dbReference type="UCSC" id="uc002wfg.3">
    <molecule id="Q5JXA9-1"/>
    <property type="organism name" value="human"/>
</dbReference>
<dbReference type="AGR" id="HGNC:16247"/>
<dbReference type="CTD" id="284759"/>
<dbReference type="DisGeNET" id="284759"/>
<dbReference type="GeneCards" id="SIRPB2"/>
<dbReference type="HGNC" id="HGNC:16247">
    <property type="gene designation" value="SIRPB2"/>
</dbReference>
<dbReference type="HPA" id="ENSG00000196209">
    <property type="expression patterns" value="Tissue enhanced (lymphoid)"/>
</dbReference>
<dbReference type="neXtProt" id="NX_Q5JXA9"/>
<dbReference type="OpenTargets" id="ENSG00000196209"/>
<dbReference type="PharmGKB" id="PA164742382"/>
<dbReference type="VEuPathDB" id="HostDB:ENSG00000196209"/>
<dbReference type="eggNOG" id="ENOG502SR6W">
    <property type="taxonomic scope" value="Eukaryota"/>
</dbReference>
<dbReference type="GeneTree" id="ENSGT00960000186656"/>
<dbReference type="HOGENOM" id="CLU_073754_0_0_1"/>
<dbReference type="InParanoid" id="Q5JXA9"/>
<dbReference type="OMA" id="PCSWLLA"/>
<dbReference type="OrthoDB" id="6370831at2759"/>
<dbReference type="PAN-GO" id="Q5JXA9">
    <property type="GO annotations" value="1 GO annotation based on evolutionary models"/>
</dbReference>
<dbReference type="PhylomeDB" id="Q5JXA9"/>
<dbReference type="TreeFam" id="TF341862"/>
<dbReference type="PathwayCommons" id="Q5JXA9"/>
<dbReference type="BioGRID-ORCS" id="284759">
    <property type="hits" value="12 hits in 1145 CRISPR screens"/>
</dbReference>
<dbReference type="ChiTaRS" id="SIRPB2">
    <property type="organism name" value="human"/>
</dbReference>
<dbReference type="GenomeRNAi" id="284759"/>
<dbReference type="Pharos" id="Q5JXA9">
    <property type="development level" value="Tdark"/>
</dbReference>
<dbReference type="PRO" id="PR:Q5JXA9"/>
<dbReference type="Proteomes" id="UP000005640">
    <property type="component" value="Chromosome 20"/>
</dbReference>
<dbReference type="RNAct" id="Q5JXA9">
    <property type="molecule type" value="protein"/>
</dbReference>
<dbReference type="Bgee" id="ENSG00000196209">
    <property type="expression patterns" value="Expressed in monocyte and 100 other cell types or tissues"/>
</dbReference>
<dbReference type="ExpressionAtlas" id="Q5JXA9">
    <property type="expression patterns" value="baseline and differential"/>
</dbReference>
<dbReference type="GO" id="GO:0005886">
    <property type="term" value="C:plasma membrane"/>
    <property type="evidence" value="ECO:0000318"/>
    <property type="project" value="GO_Central"/>
</dbReference>
<dbReference type="FunFam" id="2.60.40.10:FF:001534">
    <property type="entry name" value="Signal regulatory protein beta 2"/>
    <property type="match status" value="1"/>
</dbReference>
<dbReference type="FunFam" id="2.60.40.10:FF:000295">
    <property type="entry name" value="Tyrosine-protein phosphatase non-receptor type substrate 1"/>
    <property type="match status" value="1"/>
</dbReference>
<dbReference type="Gene3D" id="2.60.40.10">
    <property type="entry name" value="Immunoglobulins"/>
    <property type="match status" value="2"/>
</dbReference>
<dbReference type="InterPro" id="IPR051755">
    <property type="entry name" value="Ig-like_CS_Receptor"/>
</dbReference>
<dbReference type="InterPro" id="IPR007110">
    <property type="entry name" value="Ig-like_dom"/>
</dbReference>
<dbReference type="InterPro" id="IPR036179">
    <property type="entry name" value="Ig-like_dom_sf"/>
</dbReference>
<dbReference type="InterPro" id="IPR013783">
    <property type="entry name" value="Ig-like_fold"/>
</dbReference>
<dbReference type="InterPro" id="IPR003599">
    <property type="entry name" value="Ig_sub"/>
</dbReference>
<dbReference type="InterPro" id="IPR003598">
    <property type="entry name" value="Ig_sub2"/>
</dbReference>
<dbReference type="InterPro" id="IPR013106">
    <property type="entry name" value="Ig_V-set"/>
</dbReference>
<dbReference type="PANTHER" id="PTHR19971">
    <property type="entry name" value="SIGNAL-REGULATORY PROTEIN BETA"/>
    <property type="match status" value="1"/>
</dbReference>
<dbReference type="Pfam" id="PF07686">
    <property type="entry name" value="V-set"/>
    <property type="match status" value="2"/>
</dbReference>
<dbReference type="SMART" id="SM00409">
    <property type="entry name" value="IG"/>
    <property type="match status" value="2"/>
</dbReference>
<dbReference type="SMART" id="SM00408">
    <property type="entry name" value="IGc2"/>
    <property type="match status" value="2"/>
</dbReference>
<dbReference type="SUPFAM" id="SSF48726">
    <property type="entry name" value="Immunoglobulin"/>
    <property type="match status" value="2"/>
</dbReference>
<dbReference type="PROSITE" id="PS50835">
    <property type="entry name" value="IG_LIKE"/>
    <property type="match status" value="2"/>
</dbReference>
<accession>Q5JXA9</accession>
<accession>B4DLM9</accession>
<accession>E9PCW6</accession>
<accession>Q6TCH9</accession>
<keyword id="KW-0025">Alternative splicing</keyword>
<keyword id="KW-1015">Disulfide bond</keyword>
<keyword id="KW-0325">Glycoprotein</keyword>
<keyword id="KW-0393">Immunoglobulin domain</keyword>
<keyword id="KW-0472">Membrane</keyword>
<keyword id="KW-1267">Proteomics identification</keyword>
<keyword id="KW-1185">Reference proteome</keyword>
<keyword id="KW-0677">Repeat</keyword>
<keyword id="KW-0732">Signal</keyword>
<keyword id="KW-0812">Transmembrane</keyword>
<keyword id="KW-1133">Transmembrane helix</keyword>
<name>SIRB2_HUMAN</name>
<sequence length="342" mass="36968">MCSTMSAPTCLAHLPPCFLLLALVLVPSDASGQSSRNDWQVLQPEGPMLVAEGETLLLRCMVVGSCTDGMIKWVKVSTQDQQEIYNFKRGSFPGVMPMIQRTSEPLNCDYSIYIHNVTREHTGTYHCVRFDGLSEHSEMKSDEGTSVLVKGAGDPEPDLWIIQPQELVLGTTGDTVFLNCTVLGDGPPGPIRWFQGAGLSREAIYNFGGISHPKETAVQASNNDFSILLQNVSSEDAGTYYCVKFQRKPNRQYLSGQGTSLKVKAKSTSSKEAEFTSEPATEMSPTGLLVVFAPVVLGLKAITLAALLLALATSRRSPGQEDVKTTGPAGAMNTLAWSKGQE</sequence>
<protein>
    <recommendedName>
        <fullName>Signal-regulatory protein beta-2</fullName>
        <shortName>SIRP-beta-2</shortName>
    </recommendedName>
    <alternativeName>
        <fullName>Protein tyrosine phosphatase non-receptor type substrate 1-like 3</fullName>
    </alternativeName>
    <alternativeName>
        <fullName>Protein tyrosine phosphatase non-receptor type substrate protein</fullName>
    </alternativeName>
</protein>
<reference key="1">
    <citation type="submission" date="2003-09" db="EMBL/GenBank/DDBJ databases">
        <authorList>
            <person name="Li H."/>
            <person name="Zhong G."/>
            <person name="Zheng G."/>
            <person name="Ke R."/>
            <person name="Zhou G."/>
            <person name="Shen C."/>
            <person name="Lin L."/>
            <person name="Yang S."/>
        </authorList>
    </citation>
    <scope>NUCLEOTIDE SEQUENCE [MRNA] (ISOFORM 2)</scope>
    <scope>VARIANT ALA-215</scope>
</reference>
<reference key="2">
    <citation type="journal article" date="2004" name="Nat. Genet.">
        <title>Complete sequencing and characterization of 21,243 full-length human cDNAs.</title>
        <authorList>
            <person name="Ota T."/>
            <person name="Suzuki Y."/>
            <person name="Nishikawa T."/>
            <person name="Otsuki T."/>
            <person name="Sugiyama T."/>
            <person name="Irie R."/>
            <person name="Wakamatsu A."/>
            <person name="Hayashi K."/>
            <person name="Sato H."/>
            <person name="Nagai K."/>
            <person name="Kimura K."/>
            <person name="Makita H."/>
            <person name="Sekine M."/>
            <person name="Obayashi M."/>
            <person name="Nishi T."/>
            <person name="Shibahara T."/>
            <person name="Tanaka T."/>
            <person name="Ishii S."/>
            <person name="Yamamoto J."/>
            <person name="Saito K."/>
            <person name="Kawai Y."/>
            <person name="Isono Y."/>
            <person name="Nakamura Y."/>
            <person name="Nagahari K."/>
            <person name="Murakami K."/>
            <person name="Yasuda T."/>
            <person name="Iwayanagi T."/>
            <person name="Wagatsuma M."/>
            <person name="Shiratori A."/>
            <person name="Sudo H."/>
            <person name="Hosoiri T."/>
            <person name="Kaku Y."/>
            <person name="Kodaira H."/>
            <person name="Kondo H."/>
            <person name="Sugawara M."/>
            <person name="Takahashi M."/>
            <person name="Kanda K."/>
            <person name="Yokoi T."/>
            <person name="Furuya T."/>
            <person name="Kikkawa E."/>
            <person name="Omura Y."/>
            <person name="Abe K."/>
            <person name="Kamihara K."/>
            <person name="Katsuta N."/>
            <person name="Sato K."/>
            <person name="Tanikawa M."/>
            <person name="Yamazaki M."/>
            <person name="Ninomiya K."/>
            <person name="Ishibashi T."/>
            <person name="Yamashita H."/>
            <person name="Murakawa K."/>
            <person name="Fujimori K."/>
            <person name="Tanai H."/>
            <person name="Kimata M."/>
            <person name="Watanabe M."/>
            <person name="Hiraoka S."/>
            <person name="Chiba Y."/>
            <person name="Ishida S."/>
            <person name="Ono Y."/>
            <person name="Takiguchi S."/>
            <person name="Watanabe S."/>
            <person name="Yosida M."/>
            <person name="Hotuta T."/>
            <person name="Kusano J."/>
            <person name="Kanehori K."/>
            <person name="Takahashi-Fujii A."/>
            <person name="Hara H."/>
            <person name="Tanase T.-O."/>
            <person name="Nomura Y."/>
            <person name="Togiya S."/>
            <person name="Komai F."/>
            <person name="Hara R."/>
            <person name="Takeuchi K."/>
            <person name="Arita M."/>
            <person name="Imose N."/>
            <person name="Musashino K."/>
            <person name="Yuuki H."/>
            <person name="Oshima A."/>
            <person name="Sasaki N."/>
            <person name="Aotsuka S."/>
            <person name="Yoshikawa Y."/>
            <person name="Matsunawa H."/>
            <person name="Ichihara T."/>
            <person name="Shiohata N."/>
            <person name="Sano S."/>
            <person name="Moriya S."/>
            <person name="Momiyama H."/>
            <person name="Satoh N."/>
            <person name="Takami S."/>
            <person name="Terashima Y."/>
            <person name="Suzuki O."/>
            <person name="Nakagawa S."/>
            <person name="Senoh A."/>
            <person name="Mizoguchi H."/>
            <person name="Goto Y."/>
            <person name="Shimizu F."/>
            <person name="Wakebe H."/>
            <person name="Hishigaki H."/>
            <person name="Watanabe T."/>
            <person name="Sugiyama A."/>
            <person name="Takemoto M."/>
            <person name="Kawakami B."/>
            <person name="Yamazaki M."/>
            <person name="Watanabe K."/>
            <person name="Kumagai A."/>
            <person name="Itakura S."/>
            <person name="Fukuzumi Y."/>
            <person name="Fujimori Y."/>
            <person name="Komiyama M."/>
            <person name="Tashiro H."/>
            <person name="Tanigami A."/>
            <person name="Fujiwara T."/>
            <person name="Ono T."/>
            <person name="Yamada K."/>
            <person name="Fujii Y."/>
            <person name="Ozaki K."/>
            <person name="Hirao M."/>
            <person name="Ohmori Y."/>
            <person name="Kawabata A."/>
            <person name="Hikiji T."/>
            <person name="Kobatake N."/>
            <person name="Inagaki H."/>
            <person name="Ikema Y."/>
            <person name="Okamoto S."/>
            <person name="Okitani R."/>
            <person name="Kawakami T."/>
            <person name="Noguchi S."/>
            <person name="Itoh T."/>
            <person name="Shigeta K."/>
            <person name="Senba T."/>
            <person name="Matsumura K."/>
            <person name="Nakajima Y."/>
            <person name="Mizuno T."/>
            <person name="Morinaga M."/>
            <person name="Sasaki M."/>
            <person name="Togashi T."/>
            <person name="Oyama M."/>
            <person name="Hata H."/>
            <person name="Watanabe M."/>
            <person name="Komatsu T."/>
            <person name="Mizushima-Sugano J."/>
            <person name="Satoh T."/>
            <person name="Shirai Y."/>
            <person name="Takahashi Y."/>
            <person name="Nakagawa K."/>
            <person name="Okumura K."/>
            <person name="Nagase T."/>
            <person name="Nomura N."/>
            <person name="Kikuchi H."/>
            <person name="Masuho Y."/>
            <person name="Yamashita R."/>
            <person name="Nakai K."/>
            <person name="Yada T."/>
            <person name="Nakamura Y."/>
            <person name="Ohara O."/>
            <person name="Isogai T."/>
            <person name="Sugano S."/>
        </authorList>
    </citation>
    <scope>NUCLEOTIDE SEQUENCE [LARGE SCALE MRNA] (ISOFORM 3)</scope>
    <scope>VARIANT ALA-215</scope>
    <source>
        <tissue>Umbilical cord blood</tissue>
    </source>
</reference>
<reference key="3">
    <citation type="journal article" date="2001" name="Nature">
        <title>The DNA sequence and comparative analysis of human chromosome 20.</title>
        <authorList>
            <person name="Deloukas P."/>
            <person name="Matthews L.H."/>
            <person name="Ashurst J.L."/>
            <person name="Burton J."/>
            <person name="Gilbert J.G.R."/>
            <person name="Jones M."/>
            <person name="Stavrides G."/>
            <person name="Almeida J.P."/>
            <person name="Babbage A.K."/>
            <person name="Bagguley C.L."/>
            <person name="Bailey J."/>
            <person name="Barlow K.F."/>
            <person name="Bates K.N."/>
            <person name="Beard L.M."/>
            <person name="Beare D.M."/>
            <person name="Beasley O.P."/>
            <person name="Bird C.P."/>
            <person name="Blakey S.E."/>
            <person name="Bridgeman A.M."/>
            <person name="Brown A.J."/>
            <person name="Buck D."/>
            <person name="Burrill W.D."/>
            <person name="Butler A.P."/>
            <person name="Carder C."/>
            <person name="Carter N.P."/>
            <person name="Chapman J.C."/>
            <person name="Clamp M."/>
            <person name="Clark G."/>
            <person name="Clark L.N."/>
            <person name="Clark S.Y."/>
            <person name="Clee C.M."/>
            <person name="Clegg S."/>
            <person name="Cobley V.E."/>
            <person name="Collier R.E."/>
            <person name="Connor R.E."/>
            <person name="Corby N.R."/>
            <person name="Coulson A."/>
            <person name="Coville G.J."/>
            <person name="Deadman R."/>
            <person name="Dhami P.D."/>
            <person name="Dunn M."/>
            <person name="Ellington A.G."/>
            <person name="Frankland J.A."/>
            <person name="Fraser A."/>
            <person name="French L."/>
            <person name="Garner P."/>
            <person name="Grafham D.V."/>
            <person name="Griffiths C."/>
            <person name="Griffiths M.N.D."/>
            <person name="Gwilliam R."/>
            <person name="Hall R.E."/>
            <person name="Hammond S."/>
            <person name="Harley J.L."/>
            <person name="Heath P.D."/>
            <person name="Ho S."/>
            <person name="Holden J.L."/>
            <person name="Howden P.J."/>
            <person name="Huckle E."/>
            <person name="Hunt A.R."/>
            <person name="Hunt S.E."/>
            <person name="Jekosch K."/>
            <person name="Johnson C.M."/>
            <person name="Johnson D."/>
            <person name="Kay M.P."/>
            <person name="Kimberley A.M."/>
            <person name="King A."/>
            <person name="Knights A."/>
            <person name="Laird G.K."/>
            <person name="Lawlor S."/>
            <person name="Lehvaeslaiho M.H."/>
            <person name="Leversha M.A."/>
            <person name="Lloyd C."/>
            <person name="Lloyd D.M."/>
            <person name="Lovell J.D."/>
            <person name="Marsh V.L."/>
            <person name="Martin S.L."/>
            <person name="McConnachie L.J."/>
            <person name="McLay K."/>
            <person name="McMurray A.A."/>
            <person name="Milne S.A."/>
            <person name="Mistry D."/>
            <person name="Moore M.J.F."/>
            <person name="Mullikin J.C."/>
            <person name="Nickerson T."/>
            <person name="Oliver K."/>
            <person name="Parker A."/>
            <person name="Patel R."/>
            <person name="Pearce T.A.V."/>
            <person name="Peck A.I."/>
            <person name="Phillimore B.J.C.T."/>
            <person name="Prathalingam S.R."/>
            <person name="Plumb R.W."/>
            <person name="Ramsay H."/>
            <person name="Rice C.M."/>
            <person name="Ross M.T."/>
            <person name="Scott C.E."/>
            <person name="Sehra H.K."/>
            <person name="Shownkeen R."/>
            <person name="Sims S."/>
            <person name="Skuce C.D."/>
            <person name="Smith M.L."/>
            <person name="Soderlund C."/>
            <person name="Steward C.A."/>
            <person name="Sulston J.E."/>
            <person name="Swann R.M."/>
            <person name="Sycamore N."/>
            <person name="Taylor R."/>
            <person name="Tee L."/>
            <person name="Thomas D.W."/>
            <person name="Thorpe A."/>
            <person name="Tracey A."/>
            <person name="Tromans A.C."/>
            <person name="Vaudin M."/>
            <person name="Wall M."/>
            <person name="Wallis J.M."/>
            <person name="Whitehead S.L."/>
            <person name="Whittaker P."/>
            <person name="Willey D.L."/>
            <person name="Williams L."/>
            <person name="Williams S.A."/>
            <person name="Wilming L."/>
            <person name="Wray P.W."/>
            <person name="Hubbard T."/>
            <person name="Durbin R.M."/>
            <person name="Bentley D.R."/>
            <person name="Beck S."/>
            <person name="Rogers J."/>
        </authorList>
    </citation>
    <scope>NUCLEOTIDE SEQUENCE [LARGE SCALE GENOMIC DNA]</scope>
</reference>